<name>TRABD_HUMAN</name>
<gene>
    <name type="primary">TRABD</name>
    <name type="synonym">TTG2</name>
    <name type="ORF">PP2447</name>
</gene>
<evidence type="ECO:0000256" key="1">
    <source>
        <dbReference type="SAM" id="MobiDB-lite"/>
    </source>
</evidence>
<evidence type="ECO:0000303" key="2">
    <source>
    </source>
</evidence>
<evidence type="ECO:0000305" key="3"/>
<evidence type="ECO:0007744" key="4">
    <source>
    </source>
</evidence>
<evidence type="ECO:0007744" key="5">
    <source>
    </source>
</evidence>
<proteinExistence type="evidence at protein level"/>
<sequence>MDGEEQQPPHEANVEPVVPSEASEPVPRVLSGDPQNLSDVDAFNLLLEMKLKRRRQRPNLPRTVTQLVAEDGSRVYVVGTAHFSDDSKRDVVKTIREVQPDVVVVELCQYRVSMLKMDESTLLREAQELSLEKLQQAVRQNGLMSGLMQMLLLKVSAHITEQLGMAPGGEFREAFKEASKVPFCKFHLGDRPIPVTFKRAIAALSFWQKVRLAWGLCFLSDPISKDDVERCKQKDLLEQMMAEMIGEFPDLHRTIVSERDVYLTYMLRQAARRLELPRASDAEPRKCVPSVVVGVVGMGHVPGIEKNWSTDLNIQEIMTVPPPSVSGRVSRLAVKAAFFGLLGYSLYWMGRRTASLVLSLPAAQYCLQRVTEARHK</sequence>
<protein>
    <recommendedName>
        <fullName>TraB domain-containing protein</fullName>
    </recommendedName>
    <alternativeName>
        <fullName>Protein TTG2</fullName>
    </alternativeName>
</protein>
<reference key="1">
    <citation type="submission" date="2006-05" db="EMBL/GenBank/DDBJ databases">
        <authorList>
            <person name="Xiao L."/>
            <person name="Cheng J."/>
            <person name="Hong Y."/>
            <person name="Zhang L."/>
        </authorList>
    </citation>
    <scope>NUCLEOTIDE SEQUENCE [GENOMIC DNA]</scope>
</reference>
<reference key="2">
    <citation type="journal article" date="2003" name="Genome Res.">
        <title>Reevaluating human gene annotation: a second-generation analysis of chromosome 22.</title>
        <authorList>
            <person name="Collins J.E."/>
            <person name="Goward M.E."/>
            <person name="Cole C.G."/>
            <person name="Smink L.J."/>
            <person name="Huckle E.J."/>
            <person name="Knowles S."/>
            <person name="Bye J.M."/>
            <person name="Beare D.M."/>
            <person name="Dunham I."/>
        </authorList>
    </citation>
    <scope>NUCLEOTIDE SEQUENCE [LARGE SCALE MRNA] (ISOFORM 1)</scope>
</reference>
<reference key="3">
    <citation type="journal article" date="1999" name="Nature">
        <title>The DNA sequence of human chromosome 22.</title>
        <authorList>
            <person name="Dunham I."/>
            <person name="Hunt A.R."/>
            <person name="Collins J.E."/>
            <person name="Bruskiewich R."/>
            <person name="Beare D.M."/>
            <person name="Clamp M."/>
            <person name="Smink L.J."/>
            <person name="Ainscough R."/>
            <person name="Almeida J.P."/>
            <person name="Babbage A.K."/>
            <person name="Bagguley C."/>
            <person name="Bailey J."/>
            <person name="Barlow K.F."/>
            <person name="Bates K.N."/>
            <person name="Beasley O.P."/>
            <person name="Bird C.P."/>
            <person name="Blakey S.E."/>
            <person name="Bridgeman A.M."/>
            <person name="Buck D."/>
            <person name="Burgess J."/>
            <person name="Burrill W.D."/>
            <person name="Burton J."/>
            <person name="Carder C."/>
            <person name="Carter N.P."/>
            <person name="Chen Y."/>
            <person name="Clark G."/>
            <person name="Clegg S.M."/>
            <person name="Cobley V.E."/>
            <person name="Cole C.G."/>
            <person name="Collier R.E."/>
            <person name="Connor R."/>
            <person name="Conroy D."/>
            <person name="Corby N.R."/>
            <person name="Coville G.J."/>
            <person name="Cox A.V."/>
            <person name="Davis J."/>
            <person name="Dawson E."/>
            <person name="Dhami P.D."/>
            <person name="Dockree C."/>
            <person name="Dodsworth S.J."/>
            <person name="Durbin R.M."/>
            <person name="Ellington A.G."/>
            <person name="Evans K.L."/>
            <person name="Fey J.M."/>
            <person name="Fleming K."/>
            <person name="French L."/>
            <person name="Garner A.A."/>
            <person name="Gilbert J.G.R."/>
            <person name="Goward M.E."/>
            <person name="Grafham D.V."/>
            <person name="Griffiths M.N.D."/>
            <person name="Hall C."/>
            <person name="Hall R.E."/>
            <person name="Hall-Tamlyn G."/>
            <person name="Heathcott R.W."/>
            <person name="Ho S."/>
            <person name="Holmes S."/>
            <person name="Hunt S.E."/>
            <person name="Jones M.C."/>
            <person name="Kershaw J."/>
            <person name="Kimberley A.M."/>
            <person name="King A."/>
            <person name="Laird G.K."/>
            <person name="Langford C.F."/>
            <person name="Leversha M.A."/>
            <person name="Lloyd C."/>
            <person name="Lloyd D.M."/>
            <person name="Martyn I.D."/>
            <person name="Mashreghi-Mohammadi M."/>
            <person name="Matthews L.H."/>
            <person name="Mccann O.T."/>
            <person name="Mcclay J."/>
            <person name="Mclaren S."/>
            <person name="McMurray A.A."/>
            <person name="Milne S.A."/>
            <person name="Mortimore B.J."/>
            <person name="Odell C.N."/>
            <person name="Pavitt R."/>
            <person name="Pearce A.V."/>
            <person name="Pearson D."/>
            <person name="Phillimore B.J.C.T."/>
            <person name="Phillips S.H."/>
            <person name="Plumb R.W."/>
            <person name="Ramsay H."/>
            <person name="Ramsey Y."/>
            <person name="Rogers L."/>
            <person name="Ross M.T."/>
            <person name="Scott C.E."/>
            <person name="Sehra H.K."/>
            <person name="Skuce C.D."/>
            <person name="Smalley S."/>
            <person name="Smith M.L."/>
            <person name="Soderlund C."/>
            <person name="Spragon L."/>
            <person name="Steward C.A."/>
            <person name="Sulston J.E."/>
            <person name="Swann R.M."/>
            <person name="Vaudin M."/>
            <person name="Wall M."/>
            <person name="Wallis J.M."/>
            <person name="Whiteley M.N."/>
            <person name="Willey D.L."/>
            <person name="Williams L."/>
            <person name="Williams S.A."/>
            <person name="Williamson H."/>
            <person name="Wilmer T.E."/>
            <person name="Wilming L."/>
            <person name="Wright C.L."/>
            <person name="Hubbard T."/>
            <person name="Bentley D.R."/>
            <person name="Beck S."/>
            <person name="Rogers J."/>
            <person name="Shimizu N."/>
            <person name="Minoshima S."/>
            <person name="Kawasaki K."/>
            <person name="Sasaki T."/>
            <person name="Asakawa S."/>
            <person name="Kudoh J."/>
            <person name="Shintani A."/>
            <person name="Shibuya K."/>
            <person name="Yoshizaki Y."/>
            <person name="Aoki N."/>
            <person name="Mitsuyama S."/>
            <person name="Roe B.A."/>
            <person name="Chen F."/>
            <person name="Chu L."/>
            <person name="Crabtree J."/>
            <person name="Deschamps S."/>
            <person name="Do A."/>
            <person name="Do T."/>
            <person name="Dorman A."/>
            <person name="Fang F."/>
            <person name="Fu Y."/>
            <person name="Hu P."/>
            <person name="Hua A."/>
            <person name="Kenton S."/>
            <person name="Lai H."/>
            <person name="Lao H.I."/>
            <person name="Lewis J."/>
            <person name="Lewis S."/>
            <person name="Lin S.-P."/>
            <person name="Loh P."/>
            <person name="Malaj E."/>
            <person name="Nguyen T."/>
            <person name="Pan H."/>
            <person name="Phan S."/>
            <person name="Qi S."/>
            <person name="Qian Y."/>
            <person name="Ray L."/>
            <person name="Ren Q."/>
            <person name="Shaull S."/>
            <person name="Sloan D."/>
            <person name="Song L."/>
            <person name="Wang Q."/>
            <person name="Wang Y."/>
            <person name="Wang Z."/>
            <person name="White J."/>
            <person name="Willingham D."/>
            <person name="Wu H."/>
            <person name="Yao Z."/>
            <person name="Zhan M."/>
            <person name="Zhang G."/>
            <person name="Chissoe S."/>
            <person name="Murray J."/>
            <person name="Miller N."/>
            <person name="Minx P."/>
            <person name="Fulton R."/>
            <person name="Johnson D."/>
            <person name="Bemis G."/>
            <person name="Bentley D."/>
            <person name="Bradshaw H."/>
            <person name="Bourne S."/>
            <person name="Cordes M."/>
            <person name="Du Z."/>
            <person name="Fulton L."/>
            <person name="Goela D."/>
            <person name="Graves T."/>
            <person name="Hawkins J."/>
            <person name="Hinds K."/>
            <person name="Kemp K."/>
            <person name="Latreille P."/>
            <person name="Layman D."/>
            <person name="Ozersky P."/>
            <person name="Rohlfing T."/>
            <person name="Scheet P."/>
            <person name="Walker C."/>
            <person name="Wamsley A."/>
            <person name="Wohldmann P."/>
            <person name="Pepin K."/>
            <person name="Nelson J."/>
            <person name="Korf I."/>
            <person name="Bedell J.A."/>
            <person name="Hillier L.W."/>
            <person name="Mardis E."/>
            <person name="Waterston R."/>
            <person name="Wilson R."/>
            <person name="Emanuel B.S."/>
            <person name="Shaikh T."/>
            <person name="Kurahashi H."/>
            <person name="Saitta S."/>
            <person name="Budarf M.L."/>
            <person name="McDermid H.E."/>
            <person name="Johnson A."/>
            <person name="Wong A.C.C."/>
            <person name="Morrow B.E."/>
            <person name="Edelmann L."/>
            <person name="Kim U.J."/>
            <person name="Shizuya H."/>
            <person name="Simon M.I."/>
            <person name="Dumanski J.P."/>
            <person name="Peyrard M."/>
            <person name="Kedra D."/>
            <person name="Seroussi E."/>
            <person name="Fransson I."/>
            <person name="Tapia I."/>
            <person name="Bruder C.E."/>
            <person name="O'Brien K.P."/>
            <person name="Wilkinson P."/>
            <person name="Bodenteich A."/>
            <person name="Hartman K."/>
            <person name="Hu X."/>
            <person name="Khan A.S."/>
            <person name="Lane L."/>
            <person name="Tilahun Y."/>
            <person name="Wright H."/>
        </authorList>
    </citation>
    <scope>NUCLEOTIDE SEQUENCE [LARGE SCALE GENOMIC DNA]</scope>
</reference>
<reference key="4">
    <citation type="submission" date="2005-07" db="EMBL/GenBank/DDBJ databases">
        <authorList>
            <person name="Mural R.J."/>
            <person name="Istrail S."/>
            <person name="Sutton G.G."/>
            <person name="Florea L."/>
            <person name="Halpern A.L."/>
            <person name="Mobarry C.M."/>
            <person name="Lippert R."/>
            <person name="Walenz B."/>
            <person name="Shatkay H."/>
            <person name="Dew I."/>
            <person name="Miller J.R."/>
            <person name="Flanigan M.J."/>
            <person name="Edwards N.J."/>
            <person name="Bolanos R."/>
            <person name="Fasulo D."/>
            <person name="Halldorsson B.V."/>
            <person name="Hannenhalli S."/>
            <person name="Turner R."/>
            <person name="Yooseph S."/>
            <person name="Lu F."/>
            <person name="Nusskern D.R."/>
            <person name="Shue B.C."/>
            <person name="Zheng X.H."/>
            <person name="Zhong F."/>
            <person name="Delcher A.L."/>
            <person name="Huson D.H."/>
            <person name="Kravitz S.A."/>
            <person name="Mouchard L."/>
            <person name="Reinert K."/>
            <person name="Remington K.A."/>
            <person name="Clark A.G."/>
            <person name="Waterman M.S."/>
            <person name="Eichler E.E."/>
            <person name="Adams M.D."/>
            <person name="Hunkapiller M.W."/>
            <person name="Myers E.W."/>
            <person name="Venter J.C."/>
        </authorList>
    </citation>
    <scope>NUCLEOTIDE SEQUENCE [LARGE SCALE GENOMIC DNA]</scope>
</reference>
<reference key="5">
    <citation type="journal article" date="2004" name="Genome Res.">
        <title>The status, quality, and expansion of the NIH full-length cDNA project: the Mammalian Gene Collection (MGC).</title>
        <authorList>
            <consortium name="The MGC Project Team"/>
        </authorList>
    </citation>
    <scope>NUCLEOTIDE SEQUENCE [LARGE SCALE MRNA] (ISOFORM 2)</scope>
    <source>
        <tissue>Ovary</tissue>
    </source>
</reference>
<reference key="6">
    <citation type="journal article" date="2000" name="DNA Res.">
        <title>Characterization of long cDNA clones from human adult spleen.</title>
        <authorList>
            <person name="Hattori A."/>
            <person name="Okumura K."/>
            <person name="Nagase T."/>
            <person name="Kikuno R."/>
            <person name="Hirosawa M."/>
            <person name="Ohara O."/>
        </authorList>
    </citation>
    <scope>NUCLEOTIDE SEQUENCE [LARGE SCALE MRNA] OF 39-376</scope>
    <source>
        <tissue>Spleen</tissue>
    </source>
</reference>
<reference key="7">
    <citation type="journal article" date="2011" name="BMC Syst. Biol.">
        <title>Initial characterization of the human central proteome.</title>
        <authorList>
            <person name="Burkard T.R."/>
            <person name="Planyavsky M."/>
            <person name="Kaupe I."/>
            <person name="Breitwieser F.P."/>
            <person name="Buerckstuemmer T."/>
            <person name="Bennett K.L."/>
            <person name="Superti-Furga G."/>
            <person name="Colinge J."/>
        </authorList>
    </citation>
    <scope>IDENTIFICATION BY MASS SPECTROMETRY [LARGE SCALE ANALYSIS]</scope>
</reference>
<reference key="8">
    <citation type="journal article" date="2012" name="Proc. Natl. Acad. Sci. U.S.A.">
        <title>N-terminal acetylome analyses and functional insights of the N-terminal acetyltransferase NatB.</title>
        <authorList>
            <person name="Van Damme P."/>
            <person name="Lasa M."/>
            <person name="Polevoda B."/>
            <person name="Gazquez C."/>
            <person name="Elosegui-Artola A."/>
            <person name="Kim D.S."/>
            <person name="De Juan-Pardo E."/>
            <person name="Demeyer K."/>
            <person name="Hole K."/>
            <person name="Larrea E."/>
            <person name="Timmerman E."/>
            <person name="Prieto J."/>
            <person name="Arnesen T."/>
            <person name="Sherman F."/>
            <person name="Gevaert K."/>
            <person name="Aldabe R."/>
        </authorList>
    </citation>
    <scope>ACETYLATION [LARGE SCALE ANALYSIS] AT MET-1</scope>
    <scope>IDENTIFICATION BY MASS SPECTROMETRY [LARGE SCALE ANALYSIS]</scope>
</reference>
<reference key="9">
    <citation type="journal article" date="2013" name="J. Proteome Res.">
        <title>Toward a comprehensive characterization of a human cancer cell phosphoproteome.</title>
        <authorList>
            <person name="Zhou H."/>
            <person name="Di Palma S."/>
            <person name="Preisinger C."/>
            <person name="Peng M."/>
            <person name="Polat A.N."/>
            <person name="Heck A.J."/>
            <person name="Mohammed S."/>
        </authorList>
    </citation>
    <scope>PHOSPHORYLATION [LARGE SCALE ANALYSIS] AT THR-65</scope>
    <scope>IDENTIFICATION BY MASS SPECTROMETRY [LARGE SCALE ANALYSIS]</scope>
    <source>
        <tissue>Erythroleukemia</tissue>
    </source>
</reference>
<reference key="10">
    <citation type="journal article" date="2015" name="Proteomics">
        <title>N-terminome analysis of the human mitochondrial proteome.</title>
        <authorList>
            <person name="Vaca Jacome A.S."/>
            <person name="Rabilloud T."/>
            <person name="Schaeffer-Reiss C."/>
            <person name="Rompais M."/>
            <person name="Ayoub D."/>
            <person name="Lane L."/>
            <person name="Bairoch A."/>
            <person name="Van Dorsselaer A."/>
            <person name="Carapito C."/>
        </authorList>
    </citation>
    <scope>IDENTIFICATION BY MASS SPECTROMETRY [LARGE SCALE ANALYSIS]</scope>
</reference>
<keyword id="KW-0007">Acetylation</keyword>
<keyword id="KW-0025">Alternative splicing</keyword>
<keyword id="KW-0597">Phosphoprotein</keyword>
<keyword id="KW-1267">Proteomics identification</keyword>
<keyword id="KW-1185">Reference proteome</keyword>
<dbReference type="EMBL" id="DQ529300">
    <property type="protein sequence ID" value="ABF71986.1"/>
    <property type="molecule type" value="Genomic_RNA"/>
</dbReference>
<dbReference type="EMBL" id="AL449244">
    <property type="protein sequence ID" value="CAC15001.1"/>
    <property type="molecule type" value="mRNA"/>
</dbReference>
<dbReference type="EMBL" id="AL022328">
    <property type="status" value="NOT_ANNOTATED_CDS"/>
    <property type="molecule type" value="Genomic_DNA"/>
</dbReference>
<dbReference type="EMBL" id="CH471138">
    <property type="protein sequence ID" value="EAW73500.1"/>
    <property type="molecule type" value="Genomic_DNA"/>
</dbReference>
<dbReference type="EMBL" id="BC012445">
    <property type="protein sequence ID" value="AAH12445.1"/>
    <property type="molecule type" value="mRNA"/>
</dbReference>
<dbReference type="EMBL" id="AK024447">
    <property type="protein sequence ID" value="BAB15737.1"/>
    <property type="status" value="ALT_FRAME"/>
    <property type="molecule type" value="mRNA"/>
</dbReference>
<dbReference type="CCDS" id="CCDS14086.1">
    <molecule id="Q9H4I3-1"/>
</dbReference>
<dbReference type="RefSeq" id="NP_001307413.1">
    <property type="nucleotide sequence ID" value="NM_001320484.1"/>
</dbReference>
<dbReference type="RefSeq" id="NP_001307414.1">
    <molecule id="Q9H4I3-1"/>
    <property type="nucleotide sequence ID" value="NM_001320485.2"/>
</dbReference>
<dbReference type="RefSeq" id="NP_001307416.1">
    <molecule id="Q9H4I3-1"/>
    <property type="nucleotide sequence ID" value="NM_001320487.2"/>
</dbReference>
<dbReference type="RefSeq" id="NP_001307417.1">
    <property type="nucleotide sequence ID" value="NM_001320488.1"/>
</dbReference>
<dbReference type="RefSeq" id="NP_001365691.1">
    <molecule id="Q9H4I3-1"/>
    <property type="nucleotide sequence ID" value="NM_001378762.1"/>
</dbReference>
<dbReference type="RefSeq" id="NP_079480.2">
    <molecule id="Q9H4I3-1"/>
    <property type="nucleotide sequence ID" value="NM_025204.3"/>
</dbReference>
<dbReference type="RefSeq" id="XP_016884433.1">
    <property type="nucleotide sequence ID" value="XM_017028944.1"/>
</dbReference>
<dbReference type="RefSeq" id="XP_047297456.1">
    <molecule id="Q9H4I3-1"/>
    <property type="nucleotide sequence ID" value="XM_047441500.1"/>
</dbReference>
<dbReference type="RefSeq" id="XP_054181914.1">
    <molecule id="Q9H4I3-1"/>
    <property type="nucleotide sequence ID" value="XM_054325939.1"/>
</dbReference>
<dbReference type="SMR" id="Q9H4I3"/>
<dbReference type="BioGRID" id="123218">
    <property type="interactions" value="113"/>
</dbReference>
<dbReference type="FunCoup" id="Q9H4I3">
    <property type="interactions" value="910"/>
</dbReference>
<dbReference type="IntAct" id="Q9H4I3">
    <property type="interactions" value="48"/>
</dbReference>
<dbReference type="MINT" id="Q9H4I3"/>
<dbReference type="STRING" id="9606.ENSP00000379173"/>
<dbReference type="GlyGen" id="Q9H4I3">
    <property type="glycosylation" value="1 site, 1 O-linked glycan (1 site)"/>
</dbReference>
<dbReference type="iPTMnet" id="Q9H4I3"/>
<dbReference type="PhosphoSitePlus" id="Q9H4I3"/>
<dbReference type="SwissPalm" id="Q9H4I3"/>
<dbReference type="BioMuta" id="TRABD"/>
<dbReference type="DMDM" id="20141036"/>
<dbReference type="jPOST" id="Q9H4I3"/>
<dbReference type="MassIVE" id="Q9H4I3"/>
<dbReference type="PaxDb" id="9606-ENSP00000305664"/>
<dbReference type="PeptideAtlas" id="Q9H4I3"/>
<dbReference type="ProteomicsDB" id="80843">
    <molecule id="Q9H4I3-1"/>
</dbReference>
<dbReference type="ProteomicsDB" id="80844">
    <molecule id="Q9H4I3-2"/>
</dbReference>
<dbReference type="Pumba" id="Q9H4I3"/>
<dbReference type="Antibodypedia" id="14181">
    <property type="antibodies" value="47 antibodies from 15 providers"/>
</dbReference>
<dbReference type="DNASU" id="80305"/>
<dbReference type="Ensembl" id="ENST00000303434.8">
    <molecule id="Q9H4I3-1"/>
    <property type="protein sequence ID" value="ENSP00000305664.4"/>
    <property type="gene ID" value="ENSG00000170638.10"/>
</dbReference>
<dbReference type="Ensembl" id="ENST00000380909.9">
    <molecule id="Q9H4I3-1"/>
    <property type="protein sequence ID" value="ENSP00000370295.4"/>
    <property type="gene ID" value="ENSG00000170638.10"/>
</dbReference>
<dbReference type="Ensembl" id="ENST00000395827.5">
    <molecule id="Q9H4I3-1"/>
    <property type="protein sequence ID" value="ENSP00000379171.1"/>
    <property type="gene ID" value="ENSG00000170638.10"/>
</dbReference>
<dbReference type="GeneID" id="80305"/>
<dbReference type="KEGG" id="hsa:80305"/>
<dbReference type="MANE-Select" id="ENST00000380909.9">
    <property type="protein sequence ID" value="ENSP00000370295.4"/>
    <property type="RefSeq nucleotide sequence ID" value="NM_001320485.2"/>
    <property type="RefSeq protein sequence ID" value="NP_001307414.1"/>
</dbReference>
<dbReference type="UCSC" id="uc003bjs.2">
    <molecule id="Q9H4I3-1"/>
    <property type="organism name" value="human"/>
</dbReference>
<dbReference type="AGR" id="HGNC:28805"/>
<dbReference type="CTD" id="80305"/>
<dbReference type="DisGeNET" id="80305"/>
<dbReference type="GeneCards" id="TRABD"/>
<dbReference type="HGNC" id="HGNC:28805">
    <property type="gene designation" value="TRABD"/>
</dbReference>
<dbReference type="HPA" id="ENSG00000170638">
    <property type="expression patterns" value="Low tissue specificity"/>
</dbReference>
<dbReference type="neXtProt" id="NX_Q9H4I3"/>
<dbReference type="OpenTargets" id="ENSG00000170638"/>
<dbReference type="PharmGKB" id="PA145147893"/>
<dbReference type="VEuPathDB" id="HostDB:ENSG00000170638"/>
<dbReference type="eggNOG" id="KOG2860">
    <property type="taxonomic scope" value="Eukaryota"/>
</dbReference>
<dbReference type="GeneTree" id="ENSGT00390000009067"/>
<dbReference type="HOGENOM" id="CLU_034593_0_1_1"/>
<dbReference type="InParanoid" id="Q9H4I3"/>
<dbReference type="OMA" id="MEKMMTT"/>
<dbReference type="OrthoDB" id="48306at2759"/>
<dbReference type="PAN-GO" id="Q9H4I3">
    <property type="GO annotations" value="0 GO annotations based on evolutionary models"/>
</dbReference>
<dbReference type="PhylomeDB" id="Q9H4I3"/>
<dbReference type="TreeFam" id="TF314184"/>
<dbReference type="PathwayCommons" id="Q9H4I3"/>
<dbReference type="SignaLink" id="Q9H4I3"/>
<dbReference type="BioGRID-ORCS" id="80305">
    <property type="hits" value="18 hits in 1148 CRISPR screens"/>
</dbReference>
<dbReference type="ChiTaRS" id="TRABD">
    <property type="organism name" value="human"/>
</dbReference>
<dbReference type="GenomeRNAi" id="80305"/>
<dbReference type="Pharos" id="Q9H4I3">
    <property type="development level" value="Tdark"/>
</dbReference>
<dbReference type="PRO" id="PR:Q9H4I3"/>
<dbReference type="Proteomes" id="UP000005640">
    <property type="component" value="Chromosome 22"/>
</dbReference>
<dbReference type="RNAct" id="Q9H4I3">
    <property type="molecule type" value="protein"/>
</dbReference>
<dbReference type="Bgee" id="ENSG00000170638">
    <property type="expression patterns" value="Expressed in granulocyte and 179 other cell types or tissues"/>
</dbReference>
<dbReference type="ExpressionAtlas" id="Q9H4I3">
    <property type="expression patterns" value="baseline and differential"/>
</dbReference>
<dbReference type="GO" id="GO:0005741">
    <property type="term" value="C:mitochondrial outer membrane"/>
    <property type="evidence" value="ECO:0000314"/>
    <property type="project" value="FlyBase"/>
</dbReference>
<dbReference type="GO" id="GO:0005739">
    <property type="term" value="C:mitochondrion"/>
    <property type="evidence" value="ECO:0006056"/>
    <property type="project" value="FlyBase"/>
</dbReference>
<dbReference type="GO" id="GO:0160204">
    <property type="term" value="F:mitochondrion-mitochondrion outer membrane tether activity"/>
    <property type="evidence" value="ECO:0000315"/>
    <property type="project" value="FlyBase"/>
</dbReference>
<dbReference type="GO" id="GO:0008053">
    <property type="term" value="P:mitochondrial fusion"/>
    <property type="evidence" value="ECO:0000315"/>
    <property type="project" value="FlyBase"/>
</dbReference>
<dbReference type="CDD" id="cd14726">
    <property type="entry name" value="TraB_PrgY-like"/>
    <property type="match status" value="1"/>
</dbReference>
<dbReference type="InterPro" id="IPR002816">
    <property type="entry name" value="TraB/PrgY/GumN_fam"/>
</dbReference>
<dbReference type="InterPro" id="IPR046345">
    <property type="entry name" value="TraB_PrgY-like"/>
</dbReference>
<dbReference type="PANTHER" id="PTHR21530">
    <property type="entry name" value="PHEROMONE SHUTDOWN PROTEIN"/>
    <property type="match status" value="1"/>
</dbReference>
<dbReference type="PANTHER" id="PTHR21530:SF7">
    <property type="entry name" value="TRAB DOMAIN-CONTAINING PROTEIN"/>
    <property type="match status" value="1"/>
</dbReference>
<dbReference type="Pfam" id="PF01963">
    <property type="entry name" value="TraB_PrgY_gumN"/>
    <property type="match status" value="1"/>
</dbReference>
<comment type="alternative products">
    <event type="alternative splicing"/>
    <isoform>
        <id>Q9H4I3-1</id>
        <name>1</name>
        <sequence type="displayed"/>
    </isoform>
    <isoform>
        <id>Q9H4I3-2</id>
        <name>2</name>
        <sequence type="described" ref="VSP_002441"/>
    </isoform>
</comment>
<comment type="sequence caution" evidence="3">
    <conflict type="frameshift">
        <sequence resource="EMBL-CDS" id="BAB15737"/>
    </conflict>
</comment>
<accession>Q9H4I3</accession>
<accession>Q19CC5</accession>
<accession>Q96ED8</accession>
<accession>Q9H7N1</accession>
<accession>Q9UGX6</accession>
<accession>Q9UGX7</accession>
<organism>
    <name type="scientific">Homo sapiens</name>
    <name type="common">Human</name>
    <dbReference type="NCBI Taxonomy" id="9606"/>
    <lineage>
        <taxon>Eukaryota</taxon>
        <taxon>Metazoa</taxon>
        <taxon>Chordata</taxon>
        <taxon>Craniata</taxon>
        <taxon>Vertebrata</taxon>
        <taxon>Euteleostomi</taxon>
        <taxon>Mammalia</taxon>
        <taxon>Eutheria</taxon>
        <taxon>Euarchontoglires</taxon>
        <taxon>Primates</taxon>
        <taxon>Haplorrhini</taxon>
        <taxon>Catarrhini</taxon>
        <taxon>Hominidae</taxon>
        <taxon>Homo</taxon>
    </lineage>
</organism>
<feature type="chain" id="PRO_0000050825" description="TraB domain-containing protein">
    <location>
        <begin position="1"/>
        <end position="376"/>
    </location>
</feature>
<feature type="region of interest" description="Disordered" evidence="1">
    <location>
        <begin position="1"/>
        <end position="34"/>
    </location>
</feature>
<feature type="compositionally biased region" description="Low complexity" evidence="1">
    <location>
        <begin position="14"/>
        <end position="27"/>
    </location>
</feature>
<feature type="modified residue" description="N-acetylmethionine" evidence="4">
    <location>
        <position position="1"/>
    </location>
</feature>
<feature type="modified residue" description="Phosphothreonine" evidence="5">
    <location>
        <position position="65"/>
    </location>
</feature>
<feature type="splice variant" id="VSP_002441" description="In isoform 2." evidence="2">
    <location>
        <begin position="30"/>
        <end position="75"/>
    </location>
</feature>